<dbReference type="EC" id="6.3.4.16" evidence="1"/>
<dbReference type="EC" id="6.3.5.5" evidence="1"/>
<dbReference type="EMBL" id="Y11467">
    <property type="protein sequence ID" value="CAA72256.1"/>
    <property type="molecule type" value="Genomic_DNA"/>
</dbReference>
<dbReference type="EMBL" id="AE017221">
    <property type="protein sequence ID" value="AAS80595.1"/>
    <property type="molecule type" value="Genomic_DNA"/>
</dbReference>
<dbReference type="RefSeq" id="WP_011172699.1">
    <property type="nucleotide sequence ID" value="NC_005835.1"/>
</dbReference>
<dbReference type="SMR" id="P96495"/>
<dbReference type="KEGG" id="tth:TT_C0247"/>
<dbReference type="eggNOG" id="COG0458">
    <property type="taxonomic scope" value="Bacteria"/>
</dbReference>
<dbReference type="HOGENOM" id="CLU_000513_1_0_0"/>
<dbReference type="OrthoDB" id="9804197at2"/>
<dbReference type="UniPathway" id="UPA00068">
    <property type="reaction ID" value="UER00171"/>
</dbReference>
<dbReference type="UniPathway" id="UPA00070">
    <property type="reaction ID" value="UER00115"/>
</dbReference>
<dbReference type="Proteomes" id="UP000000592">
    <property type="component" value="Chromosome"/>
</dbReference>
<dbReference type="GO" id="GO:0005737">
    <property type="term" value="C:cytoplasm"/>
    <property type="evidence" value="ECO:0007669"/>
    <property type="project" value="TreeGrafter"/>
</dbReference>
<dbReference type="GO" id="GO:0005524">
    <property type="term" value="F:ATP binding"/>
    <property type="evidence" value="ECO:0007669"/>
    <property type="project" value="UniProtKB-UniRule"/>
</dbReference>
<dbReference type="GO" id="GO:0004087">
    <property type="term" value="F:carbamoyl-phosphate synthase (ammonia) activity"/>
    <property type="evidence" value="ECO:0007669"/>
    <property type="project" value="RHEA"/>
</dbReference>
<dbReference type="GO" id="GO:0004088">
    <property type="term" value="F:carbamoyl-phosphate synthase (glutamine-hydrolyzing) activity"/>
    <property type="evidence" value="ECO:0007669"/>
    <property type="project" value="UniProtKB-UniRule"/>
</dbReference>
<dbReference type="GO" id="GO:0046872">
    <property type="term" value="F:metal ion binding"/>
    <property type="evidence" value="ECO:0007669"/>
    <property type="project" value="UniProtKB-KW"/>
</dbReference>
<dbReference type="GO" id="GO:0044205">
    <property type="term" value="P:'de novo' UMP biosynthetic process"/>
    <property type="evidence" value="ECO:0007669"/>
    <property type="project" value="UniProtKB-UniRule"/>
</dbReference>
<dbReference type="GO" id="GO:0006541">
    <property type="term" value="P:glutamine metabolic process"/>
    <property type="evidence" value="ECO:0007669"/>
    <property type="project" value="TreeGrafter"/>
</dbReference>
<dbReference type="GO" id="GO:0006526">
    <property type="term" value="P:L-arginine biosynthetic process"/>
    <property type="evidence" value="ECO:0007669"/>
    <property type="project" value="UniProtKB-UniRule"/>
</dbReference>
<dbReference type="FunFam" id="1.10.1030.10:FF:000002">
    <property type="entry name" value="Carbamoyl-phosphate synthase large chain"/>
    <property type="match status" value="1"/>
</dbReference>
<dbReference type="FunFam" id="3.30.470.20:FF:000007">
    <property type="entry name" value="Carbamoyl-phosphate synthase large chain"/>
    <property type="match status" value="1"/>
</dbReference>
<dbReference type="FunFam" id="3.30.470.20:FF:000026">
    <property type="entry name" value="Carbamoyl-phosphate synthase large chain"/>
    <property type="match status" value="1"/>
</dbReference>
<dbReference type="FunFam" id="3.40.50.20:FF:000001">
    <property type="entry name" value="Carbamoyl-phosphate synthase large chain"/>
    <property type="match status" value="1"/>
</dbReference>
<dbReference type="FunFam" id="3.40.50.20:FF:000002">
    <property type="entry name" value="Carbamoyl-phosphate synthase large chain"/>
    <property type="match status" value="1"/>
</dbReference>
<dbReference type="Gene3D" id="3.40.50.20">
    <property type="match status" value="2"/>
</dbReference>
<dbReference type="Gene3D" id="3.30.470.20">
    <property type="entry name" value="ATP-grasp fold, B domain"/>
    <property type="match status" value="2"/>
</dbReference>
<dbReference type="Gene3D" id="1.10.1030.10">
    <property type="entry name" value="Carbamoyl-phosphate synthetase, large subunit oligomerisation domain"/>
    <property type="match status" value="1"/>
</dbReference>
<dbReference type="HAMAP" id="MF_01210_B">
    <property type="entry name" value="CPSase_L_chain_B"/>
    <property type="match status" value="1"/>
</dbReference>
<dbReference type="InterPro" id="IPR011761">
    <property type="entry name" value="ATP-grasp"/>
</dbReference>
<dbReference type="InterPro" id="IPR006275">
    <property type="entry name" value="CarbamoylP_synth_lsu"/>
</dbReference>
<dbReference type="InterPro" id="IPR005480">
    <property type="entry name" value="CarbamoylP_synth_lsu_oligo"/>
</dbReference>
<dbReference type="InterPro" id="IPR036897">
    <property type="entry name" value="CarbamoylP_synth_lsu_oligo_sf"/>
</dbReference>
<dbReference type="InterPro" id="IPR005479">
    <property type="entry name" value="CbamoylP_synth_lsu-like_ATP-bd"/>
</dbReference>
<dbReference type="InterPro" id="IPR005483">
    <property type="entry name" value="CbamoylP_synth_lsu_CPSase_dom"/>
</dbReference>
<dbReference type="InterPro" id="IPR011607">
    <property type="entry name" value="MGS-like_dom"/>
</dbReference>
<dbReference type="InterPro" id="IPR016185">
    <property type="entry name" value="PreATP-grasp_dom_sf"/>
</dbReference>
<dbReference type="NCBIfam" id="TIGR01369">
    <property type="entry name" value="CPSaseII_lrg"/>
    <property type="match status" value="1"/>
</dbReference>
<dbReference type="NCBIfam" id="NF003671">
    <property type="entry name" value="PRK05294.1"/>
    <property type="match status" value="1"/>
</dbReference>
<dbReference type="NCBIfam" id="NF009455">
    <property type="entry name" value="PRK12815.1"/>
    <property type="match status" value="1"/>
</dbReference>
<dbReference type="PANTHER" id="PTHR11405:SF53">
    <property type="entry name" value="CARBAMOYL-PHOSPHATE SYNTHASE [AMMONIA], MITOCHONDRIAL"/>
    <property type="match status" value="1"/>
</dbReference>
<dbReference type="PANTHER" id="PTHR11405">
    <property type="entry name" value="CARBAMOYLTRANSFERASE FAMILY MEMBER"/>
    <property type="match status" value="1"/>
</dbReference>
<dbReference type="Pfam" id="PF02786">
    <property type="entry name" value="CPSase_L_D2"/>
    <property type="match status" value="2"/>
</dbReference>
<dbReference type="Pfam" id="PF02787">
    <property type="entry name" value="CPSase_L_D3"/>
    <property type="match status" value="1"/>
</dbReference>
<dbReference type="PRINTS" id="PR00098">
    <property type="entry name" value="CPSASE"/>
</dbReference>
<dbReference type="SMART" id="SM01096">
    <property type="entry name" value="CPSase_L_D3"/>
    <property type="match status" value="1"/>
</dbReference>
<dbReference type="SUPFAM" id="SSF48108">
    <property type="entry name" value="Carbamoyl phosphate synthetase, large subunit connection domain"/>
    <property type="match status" value="1"/>
</dbReference>
<dbReference type="SUPFAM" id="SSF56059">
    <property type="entry name" value="Glutathione synthetase ATP-binding domain-like"/>
    <property type="match status" value="2"/>
</dbReference>
<dbReference type="SUPFAM" id="SSF52440">
    <property type="entry name" value="PreATP-grasp domain"/>
    <property type="match status" value="2"/>
</dbReference>
<dbReference type="PROSITE" id="PS50975">
    <property type="entry name" value="ATP_GRASP"/>
    <property type="match status" value="2"/>
</dbReference>
<dbReference type="PROSITE" id="PS00866">
    <property type="entry name" value="CPSASE_1"/>
    <property type="match status" value="2"/>
</dbReference>
<dbReference type="PROSITE" id="PS00867">
    <property type="entry name" value="CPSASE_2"/>
    <property type="match status" value="2"/>
</dbReference>
<dbReference type="PROSITE" id="PS51855">
    <property type="entry name" value="MGS"/>
    <property type="match status" value="1"/>
</dbReference>
<feature type="chain" id="PRO_0000145059" description="Carbamoyl phosphate synthase large chain">
    <location>
        <begin position="1"/>
        <end position="1028"/>
    </location>
</feature>
<feature type="domain" description="ATP-grasp 1" evidence="1">
    <location>
        <begin position="133"/>
        <end position="328"/>
    </location>
</feature>
<feature type="domain" description="ATP-grasp 2" evidence="1">
    <location>
        <begin position="674"/>
        <end position="866"/>
    </location>
</feature>
<feature type="domain" description="MGS-like" evidence="1">
    <location>
        <begin position="934"/>
        <end position="1028"/>
    </location>
</feature>
<feature type="region of interest" description="Carboxyphosphate synthetic domain" evidence="1">
    <location>
        <begin position="1"/>
        <end position="409"/>
    </location>
</feature>
<feature type="region of interest" description="Oligomerization domain" evidence="1">
    <location>
        <begin position="410"/>
        <end position="549"/>
    </location>
</feature>
<feature type="region of interest" description="Carbamoyl phosphate synthetic domain" evidence="1">
    <location>
        <begin position="550"/>
        <end position="933"/>
    </location>
</feature>
<feature type="region of interest" description="Allosteric domain" evidence="1">
    <location>
        <begin position="934"/>
        <end position="1028"/>
    </location>
</feature>
<feature type="binding site" evidence="1">
    <location>
        <position position="129"/>
    </location>
    <ligand>
        <name>ATP</name>
        <dbReference type="ChEBI" id="CHEBI:30616"/>
        <label>1</label>
    </ligand>
</feature>
<feature type="binding site" evidence="1">
    <location>
        <position position="169"/>
    </location>
    <ligand>
        <name>ATP</name>
        <dbReference type="ChEBI" id="CHEBI:30616"/>
        <label>1</label>
    </ligand>
</feature>
<feature type="binding site" evidence="1">
    <location>
        <position position="175"/>
    </location>
    <ligand>
        <name>ATP</name>
        <dbReference type="ChEBI" id="CHEBI:30616"/>
        <label>1</label>
    </ligand>
</feature>
<feature type="binding site" evidence="1">
    <location>
        <position position="176"/>
    </location>
    <ligand>
        <name>ATP</name>
        <dbReference type="ChEBI" id="CHEBI:30616"/>
        <label>1</label>
    </ligand>
</feature>
<feature type="binding site" evidence="1">
    <location>
        <position position="208"/>
    </location>
    <ligand>
        <name>ATP</name>
        <dbReference type="ChEBI" id="CHEBI:30616"/>
        <label>1</label>
    </ligand>
</feature>
<feature type="binding site" evidence="1">
    <location>
        <position position="210"/>
    </location>
    <ligand>
        <name>ATP</name>
        <dbReference type="ChEBI" id="CHEBI:30616"/>
        <label>1</label>
    </ligand>
</feature>
<feature type="binding site" evidence="1">
    <location>
        <position position="215"/>
    </location>
    <ligand>
        <name>ATP</name>
        <dbReference type="ChEBI" id="CHEBI:30616"/>
        <label>1</label>
    </ligand>
</feature>
<feature type="binding site" evidence="1">
    <location>
        <position position="241"/>
    </location>
    <ligand>
        <name>ATP</name>
        <dbReference type="ChEBI" id="CHEBI:30616"/>
        <label>1</label>
    </ligand>
</feature>
<feature type="binding site" evidence="1">
    <location>
        <position position="242"/>
    </location>
    <ligand>
        <name>ATP</name>
        <dbReference type="ChEBI" id="CHEBI:30616"/>
        <label>1</label>
    </ligand>
</feature>
<feature type="binding site" evidence="1">
    <location>
        <position position="243"/>
    </location>
    <ligand>
        <name>ATP</name>
        <dbReference type="ChEBI" id="CHEBI:30616"/>
        <label>1</label>
    </ligand>
</feature>
<feature type="binding site" evidence="1">
    <location>
        <position position="285"/>
    </location>
    <ligand>
        <name>ATP</name>
        <dbReference type="ChEBI" id="CHEBI:30616"/>
        <label>1</label>
    </ligand>
</feature>
<feature type="binding site" evidence="1">
    <location>
        <position position="285"/>
    </location>
    <ligand>
        <name>Mg(2+)</name>
        <dbReference type="ChEBI" id="CHEBI:18420"/>
        <label>1</label>
    </ligand>
</feature>
<feature type="binding site" evidence="1">
    <location>
        <position position="285"/>
    </location>
    <ligand>
        <name>Mn(2+)</name>
        <dbReference type="ChEBI" id="CHEBI:29035"/>
        <label>1</label>
    </ligand>
</feature>
<feature type="binding site" evidence="1">
    <location>
        <position position="299"/>
    </location>
    <ligand>
        <name>ATP</name>
        <dbReference type="ChEBI" id="CHEBI:30616"/>
        <label>1</label>
    </ligand>
</feature>
<feature type="binding site" evidence="1">
    <location>
        <position position="299"/>
    </location>
    <ligand>
        <name>Mg(2+)</name>
        <dbReference type="ChEBI" id="CHEBI:18420"/>
        <label>1</label>
    </ligand>
</feature>
<feature type="binding site" evidence="1">
    <location>
        <position position="299"/>
    </location>
    <ligand>
        <name>Mg(2+)</name>
        <dbReference type="ChEBI" id="CHEBI:18420"/>
        <label>2</label>
    </ligand>
</feature>
<feature type="binding site" evidence="1">
    <location>
        <position position="299"/>
    </location>
    <ligand>
        <name>Mn(2+)</name>
        <dbReference type="ChEBI" id="CHEBI:29035"/>
        <label>1</label>
    </ligand>
</feature>
<feature type="binding site" evidence="1">
    <location>
        <position position="299"/>
    </location>
    <ligand>
        <name>Mn(2+)</name>
        <dbReference type="ChEBI" id="CHEBI:29035"/>
        <label>2</label>
    </ligand>
</feature>
<feature type="binding site" evidence="1">
    <location>
        <position position="301"/>
    </location>
    <ligand>
        <name>Mg(2+)</name>
        <dbReference type="ChEBI" id="CHEBI:18420"/>
        <label>2</label>
    </ligand>
</feature>
<feature type="binding site" evidence="1">
    <location>
        <position position="301"/>
    </location>
    <ligand>
        <name>Mn(2+)</name>
        <dbReference type="ChEBI" id="CHEBI:29035"/>
        <label>2</label>
    </ligand>
</feature>
<feature type="binding site" evidence="1">
    <location>
        <position position="710"/>
    </location>
    <ligand>
        <name>ATP</name>
        <dbReference type="ChEBI" id="CHEBI:30616"/>
        <label>2</label>
    </ligand>
</feature>
<feature type="binding site" evidence="1">
    <location>
        <position position="750"/>
    </location>
    <ligand>
        <name>ATP</name>
        <dbReference type="ChEBI" id="CHEBI:30616"/>
        <label>2</label>
    </ligand>
</feature>
<feature type="binding site" evidence="1">
    <location>
        <position position="752"/>
    </location>
    <ligand>
        <name>ATP</name>
        <dbReference type="ChEBI" id="CHEBI:30616"/>
        <label>2</label>
    </ligand>
</feature>
<feature type="binding site" evidence="1">
    <location>
        <position position="757"/>
    </location>
    <ligand>
        <name>ATP</name>
        <dbReference type="ChEBI" id="CHEBI:30616"/>
        <label>2</label>
    </ligand>
</feature>
<feature type="binding site" evidence="1">
    <location>
        <position position="782"/>
    </location>
    <ligand>
        <name>ATP</name>
        <dbReference type="ChEBI" id="CHEBI:30616"/>
        <label>2</label>
    </ligand>
</feature>
<feature type="binding site" evidence="1">
    <location>
        <position position="783"/>
    </location>
    <ligand>
        <name>ATP</name>
        <dbReference type="ChEBI" id="CHEBI:30616"/>
        <label>2</label>
    </ligand>
</feature>
<feature type="binding site" evidence="1">
    <location>
        <position position="784"/>
    </location>
    <ligand>
        <name>ATP</name>
        <dbReference type="ChEBI" id="CHEBI:30616"/>
        <label>2</label>
    </ligand>
</feature>
<feature type="binding site" evidence="1">
    <location>
        <position position="785"/>
    </location>
    <ligand>
        <name>ATP</name>
        <dbReference type="ChEBI" id="CHEBI:30616"/>
        <label>2</label>
    </ligand>
</feature>
<feature type="binding site" evidence="1">
    <location>
        <position position="825"/>
    </location>
    <ligand>
        <name>ATP</name>
        <dbReference type="ChEBI" id="CHEBI:30616"/>
        <label>2</label>
    </ligand>
</feature>
<feature type="binding site" evidence="1">
    <location>
        <position position="825"/>
    </location>
    <ligand>
        <name>Mg(2+)</name>
        <dbReference type="ChEBI" id="CHEBI:18420"/>
        <label>3</label>
    </ligand>
</feature>
<feature type="binding site" evidence="1">
    <location>
        <position position="825"/>
    </location>
    <ligand>
        <name>Mn(2+)</name>
        <dbReference type="ChEBI" id="CHEBI:29035"/>
        <label>3</label>
    </ligand>
</feature>
<feature type="binding site" evidence="1">
    <location>
        <position position="837"/>
    </location>
    <ligand>
        <name>ATP</name>
        <dbReference type="ChEBI" id="CHEBI:30616"/>
        <label>2</label>
    </ligand>
</feature>
<feature type="binding site" evidence="1">
    <location>
        <position position="837"/>
    </location>
    <ligand>
        <name>Mg(2+)</name>
        <dbReference type="ChEBI" id="CHEBI:18420"/>
        <label>3</label>
    </ligand>
</feature>
<feature type="binding site" evidence="1">
    <location>
        <position position="837"/>
    </location>
    <ligand>
        <name>Mg(2+)</name>
        <dbReference type="ChEBI" id="CHEBI:18420"/>
        <label>4</label>
    </ligand>
</feature>
<feature type="binding site" evidence="1">
    <location>
        <position position="837"/>
    </location>
    <ligand>
        <name>Mn(2+)</name>
        <dbReference type="ChEBI" id="CHEBI:29035"/>
        <label>3</label>
    </ligand>
</feature>
<feature type="binding site" evidence="1">
    <location>
        <position position="837"/>
    </location>
    <ligand>
        <name>Mn(2+)</name>
        <dbReference type="ChEBI" id="CHEBI:29035"/>
        <label>4</label>
    </ligand>
</feature>
<feature type="binding site" evidence="1">
    <location>
        <position position="839"/>
    </location>
    <ligand>
        <name>Mg(2+)</name>
        <dbReference type="ChEBI" id="CHEBI:18420"/>
        <label>4</label>
    </ligand>
</feature>
<feature type="binding site" evidence="1">
    <location>
        <position position="839"/>
    </location>
    <ligand>
        <name>Mn(2+)</name>
        <dbReference type="ChEBI" id="CHEBI:29035"/>
        <label>4</label>
    </ligand>
</feature>
<feature type="sequence conflict" description="In Ref. 1; CAA72256." evidence="2" ref="1">
    <original>G</original>
    <variation>P</variation>
    <location>
        <position position="329"/>
    </location>
</feature>
<feature type="sequence conflict" description="In Ref. 1; CAA72256." evidence="2" ref="1">
    <original>K</original>
    <variation>Q</variation>
    <location>
        <position position="489"/>
    </location>
</feature>
<feature type="sequence conflict" description="In Ref. 1; CAA72256." evidence="2" ref="1">
    <original>T</original>
    <variation>P</variation>
    <location>
        <position position="536"/>
    </location>
</feature>
<feature type="sequence conflict" description="In Ref. 1; CAA72256." evidence="2" ref="1">
    <original>A</original>
    <variation>P</variation>
    <location>
        <position position="576"/>
    </location>
</feature>
<feature type="sequence conflict" description="In Ref. 1; CAA72256." evidence="2" ref="1">
    <original>F</original>
    <variation>V</variation>
    <location>
        <position position="613"/>
    </location>
</feature>
<feature type="sequence conflict" description="In Ref. 1; CAA72256." evidence="2" ref="1">
    <original>E</original>
    <variation>Q</variation>
    <location>
        <position position="628"/>
    </location>
</feature>
<accession>P96495</accession>
<name>CARB_THET2</name>
<evidence type="ECO:0000255" key="1">
    <source>
        <dbReference type="HAMAP-Rule" id="MF_01210"/>
    </source>
</evidence>
<evidence type="ECO:0000305" key="2"/>
<sequence>MPPRRDLKKILIIGSGPITIGQAAEFDYSGTQAVKALRGAGYRVVLVNSNPATIMTDPELAERTYIEPLDLEHLEGILAREAPDALLPTLGGQTGLNLAMALYEEGILQKYGVELIGAKAEAIRKGEDREAFQEAMRRIDLEVPRGQLVGSVEEGLHFAREVGFPVVVRPSFTLGGTGGGIAHDEAELVEVLSRGLTLSPVHTALVEESVLGWKEFELEVMRDHADTVVIITSIENVDPMGVHTGDSITVAPAQTLSDVEYQRMRDAAKAIIREIGVETGGSNIQFAVDPKTGRQVVIEMNPRVSRSSALASKATGFPIAKIAALLAVGYRLDELPNDITRKTPASFEPTIDYVVVKIPRFAFEKFRPLRNTLGELKDELTTQMKSVGEVMAIGRTFKEALMKALRGLERDVRALAGVRTEELEKKLYPNPDRVYAVMELLRRGMPVEELYQATRIDPWFLHQMKEIVEAEEWLKTHPPKDREDWRFYKGLGLTDRRIGELLGKGEKEVRAERKALGVVPVYKTVDTCAAEFEAYTPYHYSTYELEDEVWPSQKPKVVILGSGPIRIGQGVEFDYATVHAVWALKEAGFETIMVNSNPETVSTDYDTADRLYFEPLTLEDVLNIVEHEKPIGVIATLGGQTPLKLAKGLEEAGVRLLGTPFSAIHQAEDREAFHALCQRLGIPQPEGRVAQSPEEALRLAPEVGFPLLVRPSYVLGGRAMQVVRDEGELKRYLEEVYAPLEERPSILLDRFLEGAIELDVDALSDGQEVMVAGIMEHVERAGVHSGDSATLLPPVHVPEEALKKVRDYTRRLALTLGVRGLLNVQYAVVGEEVYVLEANPRASRTVPFVSKAIGVPLAKLAALIAVGKTLKELGVRDLDPVPPYYAAKEVVIPWIKFPGVIPELGPEMRSTGESMGIDQDPYLAYYKAELGAGQRLPLSGQVRFIGEGLEDLKALYQEAGFALTEGQDYDLLISLVPDPELRRAVERGLPFITTREGAWWSLKAILRARESGLRVQSLQDWHQKAPRG</sequence>
<keyword id="KW-0028">Amino-acid biosynthesis</keyword>
<keyword id="KW-0055">Arginine biosynthesis</keyword>
<keyword id="KW-0067">ATP-binding</keyword>
<keyword id="KW-0436">Ligase</keyword>
<keyword id="KW-0460">Magnesium</keyword>
<keyword id="KW-0464">Manganese</keyword>
<keyword id="KW-0479">Metal-binding</keyword>
<keyword id="KW-0547">Nucleotide-binding</keyword>
<keyword id="KW-0665">Pyrimidine biosynthesis</keyword>
<keyword id="KW-0677">Repeat</keyword>
<protein>
    <recommendedName>
        <fullName evidence="1">Carbamoyl phosphate synthase large chain</fullName>
        <ecNumber evidence="1">6.3.4.16</ecNumber>
        <ecNumber evidence="1">6.3.5.5</ecNumber>
    </recommendedName>
    <alternativeName>
        <fullName evidence="1">Carbamoyl phosphate synthetase ammonia chain</fullName>
    </alternativeName>
</protein>
<proteinExistence type="inferred from homology"/>
<comment type="function">
    <text evidence="1">Large subunit of the glutamine-dependent carbamoyl phosphate synthetase (CPSase). CPSase catalyzes the formation of carbamoyl phosphate from the ammonia moiety of glutamine, carbonate, and phosphate donated by ATP, constituting the first step of 2 biosynthetic pathways, one leading to arginine and/or urea and the other to pyrimidine nucleotides. The large subunit (synthetase) binds the substrates ammonia (free or transferred from glutamine from the small subunit), hydrogencarbonate and ATP and carries out an ATP-coupled ligase reaction, activating hydrogencarbonate by forming carboxy phosphate which reacts with ammonia to form carbamoyl phosphate.</text>
</comment>
<comment type="catalytic activity">
    <reaction evidence="1">
        <text>hydrogencarbonate + L-glutamine + 2 ATP + H2O = carbamoyl phosphate + L-glutamate + 2 ADP + phosphate + 2 H(+)</text>
        <dbReference type="Rhea" id="RHEA:18633"/>
        <dbReference type="ChEBI" id="CHEBI:15377"/>
        <dbReference type="ChEBI" id="CHEBI:15378"/>
        <dbReference type="ChEBI" id="CHEBI:17544"/>
        <dbReference type="ChEBI" id="CHEBI:29985"/>
        <dbReference type="ChEBI" id="CHEBI:30616"/>
        <dbReference type="ChEBI" id="CHEBI:43474"/>
        <dbReference type="ChEBI" id="CHEBI:58228"/>
        <dbReference type="ChEBI" id="CHEBI:58359"/>
        <dbReference type="ChEBI" id="CHEBI:456216"/>
        <dbReference type="EC" id="6.3.5.5"/>
    </reaction>
</comment>
<comment type="catalytic activity">
    <molecule>Carbamoyl phosphate synthase large chain</molecule>
    <reaction evidence="1">
        <text>hydrogencarbonate + NH4(+) + 2 ATP = carbamoyl phosphate + 2 ADP + phosphate + 2 H(+)</text>
        <dbReference type="Rhea" id="RHEA:18029"/>
        <dbReference type="ChEBI" id="CHEBI:15378"/>
        <dbReference type="ChEBI" id="CHEBI:17544"/>
        <dbReference type="ChEBI" id="CHEBI:28938"/>
        <dbReference type="ChEBI" id="CHEBI:30616"/>
        <dbReference type="ChEBI" id="CHEBI:43474"/>
        <dbReference type="ChEBI" id="CHEBI:58228"/>
        <dbReference type="ChEBI" id="CHEBI:456216"/>
        <dbReference type="EC" id="6.3.4.16"/>
    </reaction>
</comment>
<comment type="cofactor">
    <cofactor evidence="1">
        <name>Mg(2+)</name>
        <dbReference type="ChEBI" id="CHEBI:18420"/>
    </cofactor>
    <cofactor evidence="1">
        <name>Mn(2+)</name>
        <dbReference type="ChEBI" id="CHEBI:29035"/>
    </cofactor>
    <text evidence="1">Binds 4 Mg(2+) or Mn(2+) ions per subunit.</text>
</comment>
<comment type="pathway">
    <text evidence="1">Amino-acid biosynthesis; L-arginine biosynthesis; carbamoyl phosphate from bicarbonate: step 1/1.</text>
</comment>
<comment type="pathway">
    <text evidence="1">Pyrimidine metabolism; UMP biosynthesis via de novo pathway; (S)-dihydroorotate from bicarbonate: step 1/3.</text>
</comment>
<comment type="subunit">
    <text evidence="1">Composed of two chains; the small (or glutamine) chain promotes the hydrolysis of glutamine to ammonia, which is used by the large (or ammonia) chain to synthesize carbamoyl phosphate. Tetramer of heterodimers (alpha,beta)4.</text>
</comment>
<comment type="domain">
    <text evidence="1">The large subunit is composed of 2 ATP-grasp domains that are involved in binding the 2 ATP molecules needed for carbamoyl phosphate synthesis. The N-terminal ATP-grasp domain (referred to as the carboxyphosphate synthetic component) catalyzes the ATP-dependent phosphorylation of hydrogencarbonate to carboxyphosphate and the subsequent nucleophilic attack by ammonia to form a carbamate intermediate. The C-terminal ATP-grasp domain (referred to as the carbamoyl phosphate synthetic component) then catalyzes the phosphorylation of carbamate with the second ATP to form the end product carbamoyl phosphate. The reactive and unstable enzyme intermediates are sequentially channeled from one active site to the next through the interior of the protein over a distance of at least 96 A.</text>
</comment>
<comment type="similarity">
    <text evidence="1">Belongs to the CarB family.</text>
</comment>
<reference key="1">
    <citation type="submission" date="1997-02" db="EMBL/GenBank/DDBJ databases">
        <authorList>
            <person name="Baetens M."/>
            <person name="Van de Casteele M."/>
            <person name="Legrain C."/>
            <person name="Glansdorff N."/>
        </authorList>
    </citation>
    <scope>NUCLEOTIDE SEQUENCE [GENOMIC DNA]</scope>
</reference>
<reference key="2">
    <citation type="journal article" date="2004" name="Nat. Biotechnol.">
        <title>The genome sequence of the extreme thermophile Thermus thermophilus.</title>
        <authorList>
            <person name="Henne A."/>
            <person name="Brueggemann H."/>
            <person name="Raasch C."/>
            <person name="Wiezer A."/>
            <person name="Hartsch T."/>
            <person name="Liesegang H."/>
            <person name="Johann A."/>
            <person name="Lienard T."/>
            <person name="Gohl O."/>
            <person name="Martinez-Arias R."/>
            <person name="Jacobi C."/>
            <person name="Starkuviene V."/>
            <person name="Schlenczeck S."/>
            <person name="Dencker S."/>
            <person name="Huber R."/>
            <person name="Klenk H.-P."/>
            <person name="Kramer W."/>
            <person name="Merkl R."/>
            <person name="Gottschalk G."/>
            <person name="Fritz H.-J."/>
        </authorList>
    </citation>
    <scope>NUCLEOTIDE SEQUENCE [LARGE SCALE GENOMIC DNA]</scope>
    <source>
        <strain>ATCC BAA-163 / DSM 7039 / HB27</strain>
    </source>
</reference>
<gene>
    <name evidence="1" type="primary">carB</name>
    <name type="ordered locus">TT_C0247</name>
</gene>
<organism>
    <name type="scientific">Thermus thermophilus (strain ATCC BAA-163 / DSM 7039 / HB27)</name>
    <dbReference type="NCBI Taxonomy" id="262724"/>
    <lineage>
        <taxon>Bacteria</taxon>
        <taxon>Thermotogati</taxon>
        <taxon>Deinococcota</taxon>
        <taxon>Deinococci</taxon>
        <taxon>Thermales</taxon>
        <taxon>Thermaceae</taxon>
        <taxon>Thermus</taxon>
    </lineage>
</organism>